<evidence type="ECO:0000250" key="1"/>
<evidence type="ECO:0000255" key="2"/>
<evidence type="ECO:0000305" key="3"/>
<evidence type="ECO:0000312" key="4">
    <source>
        <dbReference type="CGD" id="CAL0000179917"/>
    </source>
</evidence>
<feature type="chain" id="PRO_0000356881" description="NADH-ubiquinone oxidoreductase chain 4L">
    <location>
        <begin position="1"/>
        <end position="84"/>
    </location>
</feature>
<feature type="transmembrane region" description="Helical" evidence="2">
    <location>
        <begin position="19"/>
        <end position="39"/>
    </location>
</feature>
<feature type="transmembrane region" description="Helical" evidence="2">
    <location>
        <begin position="50"/>
        <end position="70"/>
    </location>
</feature>
<protein>
    <recommendedName>
        <fullName>NADH-ubiquinone oxidoreductase chain 4L</fullName>
        <ecNumber>7.1.1.2</ecNumber>
    </recommendedName>
    <alternativeName>
        <fullName>NADH dehydrogenase subunit 4L</fullName>
    </alternativeName>
</protein>
<reference key="1">
    <citation type="journal article" date="2001" name="J. Bacteriol.">
        <title>Infrequent genetic exchange and recombination in the mitochondrial genome of Candida albicans.</title>
        <authorList>
            <person name="Anderson J.B."/>
            <person name="Wickens C."/>
            <person name="Khan M."/>
            <person name="Cowen L.E."/>
            <person name="Federspiel N.A."/>
            <person name="Jones T."/>
            <person name="Kohn L.M."/>
        </authorList>
    </citation>
    <scope>NUCLEOTIDE SEQUENCE [LARGE SCALE GENOMIC DNA]</scope>
    <source>
        <strain>SC5314 / ATCC MYA-2876</strain>
    </source>
</reference>
<gene>
    <name type="primary">NAD4L</name>
    <name evidence="4" type="ordered locus">CM_00370W</name>
    <name type="ORF">CaalfMp12</name>
</gene>
<comment type="function">
    <text evidence="1">Core subunit of the mitochondrial membrane respiratory chain NADH dehydrogenase (Complex I) that is believed to belong to the minimal assembly required for catalysis. Complex I functions in the transfer of electrons from NADH to the respiratory chain. The immediate electron acceptor for the enzyme is believed to be ubiquinone (By similarity).</text>
</comment>
<comment type="catalytic activity">
    <reaction>
        <text>a ubiquinone + NADH + 5 H(+)(in) = a ubiquinol + NAD(+) + 4 H(+)(out)</text>
        <dbReference type="Rhea" id="RHEA:29091"/>
        <dbReference type="Rhea" id="RHEA-COMP:9565"/>
        <dbReference type="Rhea" id="RHEA-COMP:9566"/>
        <dbReference type="ChEBI" id="CHEBI:15378"/>
        <dbReference type="ChEBI" id="CHEBI:16389"/>
        <dbReference type="ChEBI" id="CHEBI:17976"/>
        <dbReference type="ChEBI" id="CHEBI:57540"/>
        <dbReference type="ChEBI" id="CHEBI:57945"/>
        <dbReference type="EC" id="7.1.1.2"/>
    </reaction>
</comment>
<comment type="subcellular location">
    <subcellularLocation>
        <location evidence="1">Mitochondrion membrane</location>
        <topology evidence="1">Multi-pass membrane protein</topology>
    </subcellularLocation>
</comment>
<comment type="similarity">
    <text evidence="3">Belongs to the complex I subunit 4L family.</text>
</comment>
<sequence>MIAVITTLLTYYMSSNNLITLLIAIEILLLTVTLKLIHISGYYDDIYGTIFSLIIIILAGAESAIGLSILVAYYRLRGTIGHSI</sequence>
<keyword id="KW-0249">Electron transport</keyword>
<keyword id="KW-0472">Membrane</keyword>
<keyword id="KW-0496">Mitochondrion</keyword>
<keyword id="KW-0520">NAD</keyword>
<keyword id="KW-1185">Reference proteome</keyword>
<keyword id="KW-0679">Respiratory chain</keyword>
<keyword id="KW-1278">Translocase</keyword>
<keyword id="KW-0812">Transmembrane</keyword>
<keyword id="KW-1133">Transmembrane helix</keyword>
<keyword id="KW-0813">Transport</keyword>
<keyword id="KW-0830">Ubiquinone</keyword>
<name>NU4LM_CANAL</name>
<proteinExistence type="inferred from homology"/>
<dbReference type="EC" id="7.1.1.2"/>
<dbReference type="EMBL" id="AF285261">
    <property type="protein sequence ID" value="AAG59596.2"/>
    <property type="molecule type" value="Genomic_DNA"/>
</dbReference>
<dbReference type="RefSeq" id="NP_075039.2">
    <property type="nucleotide sequence ID" value="NC_002653.1"/>
</dbReference>
<dbReference type="SMR" id="Q9B8D0"/>
<dbReference type="STRING" id="237561.Q9B8D0"/>
<dbReference type="EnsemblFungi" id="CM_00370W-T">
    <property type="protein sequence ID" value="CM_00370W-T-p1"/>
    <property type="gene ID" value="CM_00370W"/>
</dbReference>
<dbReference type="GeneID" id="802558"/>
<dbReference type="KEGG" id="cal:CaalfMp12"/>
<dbReference type="CGD" id="CAL0000179917">
    <property type="gene designation" value="NAD4L"/>
</dbReference>
<dbReference type="VEuPathDB" id="FungiDB:CM_00370W"/>
<dbReference type="InParanoid" id="Q9B8D0"/>
<dbReference type="Proteomes" id="UP000000559">
    <property type="component" value="Mitochondrion"/>
</dbReference>
<dbReference type="GO" id="GO:0031966">
    <property type="term" value="C:mitochondrial membrane"/>
    <property type="evidence" value="ECO:0007669"/>
    <property type="project" value="UniProtKB-SubCell"/>
</dbReference>
<dbReference type="GO" id="GO:0045271">
    <property type="term" value="C:respiratory chain complex I"/>
    <property type="evidence" value="ECO:0000250"/>
    <property type="project" value="CGD"/>
</dbReference>
<dbReference type="GO" id="GO:0008137">
    <property type="term" value="F:NADH dehydrogenase (ubiquinone) activity"/>
    <property type="evidence" value="ECO:0000250"/>
    <property type="project" value="CGD"/>
</dbReference>
<dbReference type="GO" id="GO:0006120">
    <property type="term" value="P:mitochondrial electron transport, NADH to ubiquinone"/>
    <property type="evidence" value="ECO:0000250"/>
    <property type="project" value="CGD"/>
</dbReference>
<dbReference type="FunFam" id="1.10.287.3510:FF:000011">
    <property type="entry name" value="NADH-ubiquinone oxidoreductase chain 4L"/>
    <property type="match status" value="1"/>
</dbReference>
<dbReference type="Gene3D" id="1.10.287.3510">
    <property type="match status" value="1"/>
</dbReference>
<dbReference type="InterPro" id="IPR001133">
    <property type="entry name" value="NADH_UbQ_OxRdtase_chain4L/K"/>
</dbReference>
<dbReference type="InterPro" id="IPR039428">
    <property type="entry name" value="NUOK/Mnh_C1-like"/>
</dbReference>
<dbReference type="PANTHER" id="PTHR11434:SF16">
    <property type="entry name" value="NADH-UBIQUINONE OXIDOREDUCTASE CHAIN 4L"/>
    <property type="match status" value="1"/>
</dbReference>
<dbReference type="PANTHER" id="PTHR11434">
    <property type="entry name" value="NADH-UBIQUINONE OXIDOREDUCTASE SUBUNIT ND4L"/>
    <property type="match status" value="1"/>
</dbReference>
<dbReference type="Pfam" id="PF00420">
    <property type="entry name" value="Oxidored_q2"/>
    <property type="match status" value="1"/>
</dbReference>
<accession>Q9B8D0</accession>
<organism>
    <name type="scientific">Candida albicans (strain SC5314 / ATCC MYA-2876)</name>
    <name type="common">Yeast</name>
    <dbReference type="NCBI Taxonomy" id="237561"/>
    <lineage>
        <taxon>Eukaryota</taxon>
        <taxon>Fungi</taxon>
        <taxon>Dikarya</taxon>
        <taxon>Ascomycota</taxon>
        <taxon>Saccharomycotina</taxon>
        <taxon>Pichiomycetes</taxon>
        <taxon>Debaryomycetaceae</taxon>
        <taxon>Candida/Lodderomyces clade</taxon>
        <taxon>Candida</taxon>
    </lineage>
</organism>
<geneLocation type="mitochondrion"/>